<gene>
    <name type="primary">alr</name>
    <name type="ordered locus">LGAS_0267</name>
</gene>
<sequence>MVPGIHRPAVVKVNLGAIKRNIENEMQHLEPGQKMLAVVKANGYGHGAVEVAKVADQIGAAGFCVAILDEALELRRADITKTILVLGVVSPEYAPIAAANDISLTVPNLEWLKEAEKYLENSDLQLKIHLGIDSGMGRIGFNEDKDFIAANKFLENNDNFYIEGMFAHFASADSSDETYFKHQCEKFNHMKSLLTVKPKWIHVDNTAASIFHNGIKSDLVRFGIGIYGLNPSSNPNSPDLKSKIALDPALSFESELTHVKTIHQGDGVGYGSTFVADKDTIIGTVPVGYADGFIRKFQGFKVKVGNTYCPIVGRICMDQFMVEMPKEMPLGTKVVIISDNPDDLNNIKAAADYVDTIHYEVACLLNDRLPRVYYED</sequence>
<protein>
    <recommendedName>
        <fullName evidence="1">Alanine racemase</fullName>
        <ecNumber evidence="1">5.1.1.1</ecNumber>
    </recommendedName>
</protein>
<evidence type="ECO:0000255" key="1">
    <source>
        <dbReference type="HAMAP-Rule" id="MF_01201"/>
    </source>
</evidence>
<accession>Q046E7</accession>
<feature type="chain" id="PRO_1000066000" description="Alanine racemase">
    <location>
        <begin position="1"/>
        <end position="376"/>
    </location>
</feature>
<feature type="active site" description="Proton acceptor; specific for D-alanine" evidence="1">
    <location>
        <position position="40"/>
    </location>
</feature>
<feature type="active site" description="Proton acceptor; specific for L-alanine" evidence="1">
    <location>
        <position position="270"/>
    </location>
</feature>
<feature type="binding site" evidence="1">
    <location>
        <position position="138"/>
    </location>
    <ligand>
        <name>substrate</name>
    </ligand>
</feature>
<feature type="binding site" evidence="1">
    <location>
        <position position="317"/>
    </location>
    <ligand>
        <name>substrate</name>
    </ligand>
</feature>
<feature type="modified residue" description="N6-(pyridoxal phosphate)lysine" evidence="1">
    <location>
        <position position="40"/>
    </location>
</feature>
<comment type="function">
    <text evidence="1">Catalyzes the interconversion of L-alanine and D-alanine. May also act on other amino acids.</text>
</comment>
<comment type="catalytic activity">
    <reaction evidence="1">
        <text>L-alanine = D-alanine</text>
        <dbReference type="Rhea" id="RHEA:20249"/>
        <dbReference type="ChEBI" id="CHEBI:57416"/>
        <dbReference type="ChEBI" id="CHEBI:57972"/>
        <dbReference type="EC" id="5.1.1.1"/>
    </reaction>
</comment>
<comment type="cofactor">
    <cofactor evidence="1">
        <name>pyridoxal 5'-phosphate</name>
        <dbReference type="ChEBI" id="CHEBI:597326"/>
    </cofactor>
</comment>
<comment type="pathway">
    <text evidence="1">Amino-acid biosynthesis; D-alanine biosynthesis; D-alanine from L-alanine: step 1/1.</text>
</comment>
<comment type="similarity">
    <text evidence="1">Belongs to the alanine racemase family.</text>
</comment>
<name>ALR_LACGA</name>
<reference key="1">
    <citation type="journal article" date="2006" name="Proc. Natl. Acad. Sci. U.S.A.">
        <title>Comparative genomics of the lactic acid bacteria.</title>
        <authorList>
            <person name="Makarova K.S."/>
            <person name="Slesarev A."/>
            <person name="Wolf Y.I."/>
            <person name="Sorokin A."/>
            <person name="Mirkin B."/>
            <person name="Koonin E.V."/>
            <person name="Pavlov A."/>
            <person name="Pavlova N."/>
            <person name="Karamychev V."/>
            <person name="Polouchine N."/>
            <person name="Shakhova V."/>
            <person name="Grigoriev I."/>
            <person name="Lou Y."/>
            <person name="Rohksar D."/>
            <person name="Lucas S."/>
            <person name="Huang K."/>
            <person name="Goodstein D.M."/>
            <person name="Hawkins T."/>
            <person name="Plengvidhya V."/>
            <person name="Welker D."/>
            <person name="Hughes J."/>
            <person name="Goh Y."/>
            <person name="Benson A."/>
            <person name="Baldwin K."/>
            <person name="Lee J.-H."/>
            <person name="Diaz-Muniz I."/>
            <person name="Dosti B."/>
            <person name="Smeianov V."/>
            <person name="Wechter W."/>
            <person name="Barabote R."/>
            <person name="Lorca G."/>
            <person name="Altermann E."/>
            <person name="Barrangou R."/>
            <person name="Ganesan B."/>
            <person name="Xie Y."/>
            <person name="Rawsthorne H."/>
            <person name="Tamir D."/>
            <person name="Parker C."/>
            <person name="Breidt F."/>
            <person name="Broadbent J.R."/>
            <person name="Hutkins R."/>
            <person name="O'Sullivan D."/>
            <person name="Steele J."/>
            <person name="Unlu G."/>
            <person name="Saier M.H. Jr."/>
            <person name="Klaenhammer T."/>
            <person name="Richardson P."/>
            <person name="Kozyavkin S."/>
            <person name="Weimer B.C."/>
            <person name="Mills D.A."/>
        </authorList>
    </citation>
    <scope>NUCLEOTIDE SEQUENCE [LARGE SCALE GENOMIC DNA]</scope>
    <source>
        <strain>ATCC 33323 / DSM 20243 / BCRC 14619 / CIP 102991 / JCM 1131 / KCTC 3163 / NCIMB 11718 / NCTC 13722 / AM63</strain>
    </source>
</reference>
<proteinExistence type="inferred from homology"/>
<keyword id="KW-0413">Isomerase</keyword>
<keyword id="KW-0663">Pyridoxal phosphate</keyword>
<dbReference type="EC" id="5.1.1.1" evidence="1"/>
<dbReference type="EMBL" id="CP000413">
    <property type="protein sequence ID" value="ABJ59675.1"/>
    <property type="molecule type" value="Genomic_DNA"/>
</dbReference>
<dbReference type="RefSeq" id="WP_003647847.1">
    <property type="nucleotide sequence ID" value="NZ_WBMG01000001.1"/>
</dbReference>
<dbReference type="SMR" id="Q046E7"/>
<dbReference type="GeneID" id="29639804"/>
<dbReference type="KEGG" id="lga:LGAS_0267"/>
<dbReference type="HOGENOM" id="CLU_028393_2_1_9"/>
<dbReference type="BioCyc" id="LGAS324831:G1G6Y-265-MONOMER"/>
<dbReference type="UniPathway" id="UPA00042">
    <property type="reaction ID" value="UER00497"/>
</dbReference>
<dbReference type="Proteomes" id="UP000000664">
    <property type="component" value="Chromosome"/>
</dbReference>
<dbReference type="GO" id="GO:0005829">
    <property type="term" value="C:cytosol"/>
    <property type="evidence" value="ECO:0007669"/>
    <property type="project" value="TreeGrafter"/>
</dbReference>
<dbReference type="GO" id="GO:0008784">
    <property type="term" value="F:alanine racemase activity"/>
    <property type="evidence" value="ECO:0007669"/>
    <property type="project" value="UniProtKB-UniRule"/>
</dbReference>
<dbReference type="GO" id="GO:0030170">
    <property type="term" value="F:pyridoxal phosphate binding"/>
    <property type="evidence" value="ECO:0007669"/>
    <property type="project" value="UniProtKB-UniRule"/>
</dbReference>
<dbReference type="GO" id="GO:0030632">
    <property type="term" value="P:D-alanine biosynthetic process"/>
    <property type="evidence" value="ECO:0007669"/>
    <property type="project" value="UniProtKB-UniRule"/>
</dbReference>
<dbReference type="GO" id="GO:0009252">
    <property type="term" value="P:peptidoglycan biosynthetic process"/>
    <property type="evidence" value="ECO:0007669"/>
    <property type="project" value="TreeGrafter"/>
</dbReference>
<dbReference type="CDD" id="cd00430">
    <property type="entry name" value="PLPDE_III_AR"/>
    <property type="match status" value="1"/>
</dbReference>
<dbReference type="FunFam" id="3.20.20.10:FF:000002">
    <property type="entry name" value="Alanine racemase"/>
    <property type="match status" value="1"/>
</dbReference>
<dbReference type="Gene3D" id="3.20.20.10">
    <property type="entry name" value="Alanine racemase"/>
    <property type="match status" value="1"/>
</dbReference>
<dbReference type="Gene3D" id="2.40.37.10">
    <property type="entry name" value="Lyase, Ornithine Decarboxylase, Chain A, domain 1"/>
    <property type="match status" value="1"/>
</dbReference>
<dbReference type="HAMAP" id="MF_01201">
    <property type="entry name" value="Ala_racemase"/>
    <property type="match status" value="1"/>
</dbReference>
<dbReference type="InterPro" id="IPR000821">
    <property type="entry name" value="Ala_racemase"/>
</dbReference>
<dbReference type="InterPro" id="IPR009006">
    <property type="entry name" value="Ala_racemase/Decarboxylase_C"/>
</dbReference>
<dbReference type="InterPro" id="IPR011079">
    <property type="entry name" value="Ala_racemase_C"/>
</dbReference>
<dbReference type="InterPro" id="IPR001608">
    <property type="entry name" value="Ala_racemase_N"/>
</dbReference>
<dbReference type="InterPro" id="IPR020622">
    <property type="entry name" value="Ala_racemase_pyridoxalP-BS"/>
</dbReference>
<dbReference type="InterPro" id="IPR029066">
    <property type="entry name" value="PLP-binding_barrel"/>
</dbReference>
<dbReference type="NCBIfam" id="TIGR00492">
    <property type="entry name" value="alr"/>
    <property type="match status" value="1"/>
</dbReference>
<dbReference type="PANTHER" id="PTHR30511">
    <property type="entry name" value="ALANINE RACEMASE"/>
    <property type="match status" value="1"/>
</dbReference>
<dbReference type="PANTHER" id="PTHR30511:SF0">
    <property type="entry name" value="ALANINE RACEMASE, CATABOLIC-RELATED"/>
    <property type="match status" value="1"/>
</dbReference>
<dbReference type="Pfam" id="PF00842">
    <property type="entry name" value="Ala_racemase_C"/>
    <property type="match status" value="1"/>
</dbReference>
<dbReference type="Pfam" id="PF01168">
    <property type="entry name" value="Ala_racemase_N"/>
    <property type="match status" value="1"/>
</dbReference>
<dbReference type="PRINTS" id="PR00992">
    <property type="entry name" value="ALARACEMASE"/>
</dbReference>
<dbReference type="SMART" id="SM01005">
    <property type="entry name" value="Ala_racemase_C"/>
    <property type="match status" value="1"/>
</dbReference>
<dbReference type="SUPFAM" id="SSF50621">
    <property type="entry name" value="Alanine racemase C-terminal domain-like"/>
    <property type="match status" value="1"/>
</dbReference>
<dbReference type="SUPFAM" id="SSF51419">
    <property type="entry name" value="PLP-binding barrel"/>
    <property type="match status" value="1"/>
</dbReference>
<dbReference type="PROSITE" id="PS00395">
    <property type="entry name" value="ALANINE_RACEMASE"/>
    <property type="match status" value="1"/>
</dbReference>
<organism>
    <name type="scientific">Lactobacillus gasseri (strain ATCC 33323 / DSM 20243 / BCRC 14619 / CIP 102991 / JCM 1131 / KCTC 3163 / NCIMB 11718 / NCTC 13722 / AM63)</name>
    <dbReference type="NCBI Taxonomy" id="324831"/>
    <lineage>
        <taxon>Bacteria</taxon>
        <taxon>Bacillati</taxon>
        <taxon>Bacillota</taxon>
        <taxon>Bacilli</taxon>
        <taxon>Lactobacillales</taxon>
        <taxon>Lactobacillaceae</taxon>
        <taxon>Lactobacillus</taxon>
    </lineage>
</organism>